<proteinExistence type="inferred from homology"/>
<evidence type="ECO:0000250" key="1"/>
<evidence type="ECO:0000305" key="2"/>
<comment type="function">
    <text evidence="1">Toxic component of a type II toxin-antitoxin (TA) system. A probable translation-independent mRNA interferase (By similarity).</text>
</comment>
<comment type="subunit">
    <text evidence="1">Probably forms a complex with the cognate antitoxin HicB 2 which inhibits the mRNA interferase activity.</text>
</comment>
<comment type="similarity">
    <text evidence="2">Belongs to the HicA mRNA interferase family.</text>
</comment>
<comment type="sequence caution" evidence="2">
    <conflict type="erroneous initiation">
        <sequence resource="EMBL-CDS" id="CAE16725"/>
    </conflict>
    <text>Extended N-terminus.</text>
</comment>
<name>HICA2_PHOLL</name>
<reference key="1">
    <citation type="journal article" date="2003" name="Nat. Biotechnol.">
        <title>The genome sequence of the entomopathogenic bacterium Photorhabdus luminescens.</title>
        <authorList>
            <person name="Duchaud E."/>
            <person name="Rusniok C."/>
            <person name="Frangeul L."/>
            <person name="Buchrieser C."/>
            <person name="Givaudan A."/>
            <person name="Taourit S."/>
            <person name="Bocs S."/>
            <person name="Boursaux-Eude C."/>
            <person name="Chandler M."/>
            <person name="Charles J.-F."/>
            <person name="Dassa E."/>
            <person name="Derose R."/>
            <person name="Derzelle S."/>
            <person name="Freyssinet G."/>
            <person name="Gaudriault S."/>
            <person name="Medigue C."/>
            <person name="Lanois A."/>
            <person name="Powell K."/>
            <person name="Siguier P."/>
            <person name="Vincent R."/>
            <person name="Wingate V."/>
            <person name="Zouine M."/>
            <person name="Glaser P."/>
            <person name="Boemare N."/>
            <person name="Danchin A."/>
            <person name="Kunst F."/>
        </authorList>
    </citation>
    <scope>NUCLEOTIDE SEQUENCE [LARGE SCALE GENOMIC DNA]</scope>
    <source>
        <strain>DSM 15139 / CIP 105565 / TT01</strain>
    </source>
</reference>
<protein>
    <recommendedName>
        <fullName>Probable mRNA interferase HicA 2</fullName>
        <ecNumber>3.1.-.-</ecNumber>
    </recommendedName>
    <alternativeName>
        <fullName>Endoribonuclease HicA 2</fullName>
    </alternativeName>
    <alternativeName>
        <fullName>Toxin HicA 2</fullName>
    </alternativeName>
</protein>
<gene>
    <name type="primary">hicA2</name>
    <name type="ordered locus">plu4353</name>
</gene>
<dbReference type="EC" id="3.1.-.-"/>
<dbReference type="EMBL" id="BX571873">
    <property type="protein sequence ID" value="CAE16725.1"/>
    <property type="status" value="ALT_INIT"/>
    <property type="molecule type" value="Genomic_DNA"/>
</dbReference>
<dbReference type="RefSeq" id="WP_041381194.1">
    <property type="nucleotide sequence ID" value="NC_005126.1"/>
</dbReference>
<dbReference type="SMR" id="Q7MZD9"/>
<dbReference type="STRING" id="243265.plu4353"/>
<dbReference type="GeneID" id="48850561"/>
<dbReference type="KEGG" id="plu:plu4353"/>
<dbReference type="eggNOG" id="COG1724">
    <property type="taxonomic scope" value="Bacteria"/>
</dbReference>
<dbReference type="HOGENOM" id="CLU_164851_5_0_6"/>
<dbReference type="OrthoDB" id="6699594at2"/>
<dbReference type="Proteomes" id="UP000002514">
    <property type="component" value="Chromosome"/>
</dbReference>
<dbReference type="GO" id="GO:0004519">
    <property type="term" value="F:endonuclease activity"/>
    <property type="evidence" value="ECO:0007669"/>
    <property type="project" value="UniProtKB-KW"/>
</dbReference>
<dbReference type="GO" id="GO:0003729">
    <property type="term" value="F:mRNA binding"/>
    <property type="evidence" value="ECO:0007669"/>
    <property type="project" value="InterPro"/>
</dbReference>
<dbReference type="Gene3D" id="3.30.920.30">
    <property type="entry name" value="Hypothetical protein"/>
    <property type="match status" value="1"/>
</dbReference>
<dbReference type="InterPro" id="IPR012933">
    <property type="entry name" value="HicA_mRNA_interferase"/>
</dbReference>
<dbReference type="InterPro" id="IPR038570">
    <property type="entry name" value="HicA_sf"/>
</dbReference>
<dbReference type="Pfam" id="PF07927">
    <property type="entry name" value="HicA_toxin"/>
    <property type="match status" value="1"/>
</dbReference>
<dbReference type="SUPFAM" id="SSF54786">
    <property type="entry name" value="YcfA/nrd intein domain"/>
    <property type="match status" value="1"/>
</dbReference>
<keyword id="KW-0255">Endonuclease</keyword>
<keyword id="KW-0378">Hydrolase</keyword>
<keyword id="KW-0540">Nuclease</keyword>
<keyword id="KW-1185">Reference proteome</keyword>
<keyword id="KW-0694">RNA-binding</keyword>
<keyword id="KW-0346">Stress response</keyword>
<keyword id="KW-1277">Toxin-antitoxin system</keyword>
<accession>Q7MZD9</accession>
<organism>
    <name type="scientific">Photorhabdus laumondii subsp. laumondii (strain DSM 15139 / CIP 105565 / TT01)</name>
    <name type="common">Photorhabdus luminescens subsp. laumondii</name>
    <dbReference type="NCBI Taxonomy" id="243265"/>
    <lineage>
        <taxon>Bacteria</taxon>
        <taxon>Pseudomonadati</taxon>
        <taxon>Pseudomonadota</taxon>
        <taxon>Gammaproteobacteria</taxon>
        <taxon>Enterobacterales</taxon>
        <taxon>Morganellaceae</taxon>
        <taxon>Photorhabdus</taxon>
    </lineage>
</organism>
<sequence>MKQSEFRRWLKAQGAEFKDGTNHLKVFLNGKQTTMPRHPSKEIPEPLRKLILKQPGIK</sequence>
<feature type="chain" id="PRO_0000259910" description="Probable mRNA interferase HicA 2">
    <location>
        <begin position="1"/>
        <end position="58"/>
    </location>
</feature>